<name>CAC3_BOVIN</name>
<feature type="propeptide" id="PRO_0000028446" description="Activation peptide">
    <location>
        <begin position="1"/>
        <end position="11"/>
    </location>
</feature>
<feature type="chain" id="PRO_0000028447" description="Proproteinase E">
    <location>
        <begin position="12"/>
        <end position="253"/>
    </location>
</feature>
<feature type="domain" description="Peptidase S1" evidence="1">
    <location>
        <begin position="12"/>
        <end position="251"/>
    </location>
</feature>
<feature type="disulfide bond" evidence="1 2">
    <location>
        <begin position="41"/>
        <end position="57"/>
    </location>
</feature>
<feature type="disulfide bond" evidence="1 2">
    <location>
        <begin position="100"/>
        <end position="103"/>
    </location>
</feature>
<feature type="disulfide bond" evidence="1 2">
    <location>
        <begin position="140"/>
        <end position="206"/>
    </location>
</feature>
<feature type="disulfide bond" evidence="1 2">
    <location>
        <begin position="171"/>
        <end position="187"/>
    </location>
</feature>
<feature type="disulfide bond" evidence="1 2">
    <location>
        <begin position="196"/>
        <end position="227"/>
    </location>
</feature>
<feature type="turn" evidence="5">
    <location>
        <begin position="20"/>
        <end position="22"/>
    </location>
</feature>
<feature type="strand" evidence="4">
    <location>
        <begin position="23"/>
        <end position="33"/>
    </location>
</feature>
<feature type="strand" evidence="4">
    <location>
        <begin position="36"/>
        <end position="41"/>
    </location>
</feature>
<feature type="strand" evidence="4">
    <location>
        <begin position="44"/>
        <end position="47"/>
    </location>
</feature>
<feature type="strand" evidence="4">
    <location>
        <begin position="50"/>
        <end position="53"/>
    </location>
</feature>
<feature type="helix" evidence="4">
    <location>
        <begin position="55"/>
        <end position="57"/>
    </location>
</feature>
<feature type="strand" evidence="4">
    <location>
        <begin position="64"/>
        <end position="72"/>
    </location>
</feature>
<feature type="strand" evidence="4">
    <location>
        <begin position="75"/>
        <end position="85"/>
    </location>
</feature>
<feature type="strand" evidence="4">
    <location>
        <begin position="89"/>
        <end position="92"/>
    </location>
</feature>
<feature type="helix" evidence="4">
    <location>
        <begin position="101"/>
        <end position="103"/>
    </location>
</feature>
<feature type="strand" evidence="4">
    <location>
        <begin position="108"/>
        <end position="111"/>
    </location>
</feature>
<feature type="strand" evidence="5">
    <location>
        <begin position="119"/>
        <end position="122"/>
    </location>
</feature>
<feature type="strand" evidence="4">
    <location>
        <begin position="141"/>
        <end position="144"/>
    </location>
</feature>
<feature type="strand" evidence="4">
    <location>
        <begin position="151"/>
        <end position="153"/>
    </location>
</feature>
<feature type="strand" evidence="4">
    <location>
        <begin position="159"/>
        <end position="162"/>
    </location>
</feature>
<feature type="helix" evidence="4">
    <location>
        <begin position="168"/>
        <end position="171"/>
    </location>
</feature>
<feature type="turn" evidence="4">
    <location>
        <begin position="174"/>
        <end position="177"/>
    </location>
</feature>
<feature type="helix" evidence="4">
    <location>
        <begin position="178"/>
        <end position="180"/>
    </location>
</feature>
<feature type="strand" evidence="4">
    <location>
        <begin position="185"/>
        <end position="188"/>
    </location>
</feature>
<feature type="strand" evidence="4">
    <location>
        <begin position="191"/>
        <end position="193"/>
    </location>
</feature>
<feature type="strand" evidence="4">
    <location>
        <begin position="203"/>
        <end position="207"/>
    </location>
</feature>
<feature type="strand" evidence="4">
    <location>
        <begin position="209"/>
        <end position="211"/>
    </location>
</feature>
<feature type="strand" evidence="4">
    <location>
        <begin position="213"/>
        <end position="221"/>
    </location>
</feature>
<feature type="strand" evidence="4">
    <location>
        <begin position="227"/>
        <end position="229"/>
    </location>
</feature>
<feature type="strand" evidence="4">
    <location>
        <begin position="234"/>
        <end position="238"/>
    </location>
</feature>
<feature type="helix" evidence="4">
    <location>
        <begin position="239"/>
        <end position="241"/>
    </location>
</feature>
<feature type="helix" evidence="4">
    <location>
        <begin position="243"/>
        <end position="252"/>
    </location>
</feature>
<comment type="function">
    <text>May protect procarboxypeptidase A against denaturation in the acidic environment of the ruminant duodenum.</text>
</comment>
<comment type="subunit">
    <text>Monomer. The zymogen is secreted as a ternary complex composed of procarboxypeptidase A, chymotrypsinogen C and proproteinase E.</text>
</comment>
<comment type="subcellular location">
    <subcellularLocation>
        <location>Secreted</location>
        <location>Extracellular space</location>
    </subcellularLocation>
</comment>
<comment type="tissue specificity">
    <text>Pancreas.</text>
</comment>
<comment type="similarity">
    <text evidence="1">Belongs to the peptidase S1 family.</text>
</comment>
<comment type="caution">
    <text evidence="3">Defective elastase-like serine protease which does not seem to have protease activity.</text>
</comment>
<organism>
    <name type="scientific">Bos taurus</name>
    <name type="common">Bovine</name>
    <dbReference type="NCBI Taxonomy" id="9913"/>
    <lineage>
        <taxon>Eukaryota</taxon>
        <taxon>Metazoa</taxon>
        <taxon>Chordata</taxon>
        <taxon>Craniata</taxon>
        <taxon>Vertebrata</taxon>
        <taxon>Euteleostomi</taxon>
        <taxon>Mammalia</taxon>
        <taxon>Eutheria</taxon>
        <taxon>Laurasiatheria</taxon>
        <taxon>Artiodactyla</taxon>
        <taxon>Ruminantia</taxon>
        <taxon>Pecora</taxon>
        <taxon>Bovidae</taxon>
        <taxon>Bovinae</taxon>
        <taxon>Bos</taxon>
    </lineage>
</organism>
<keyword id="KW-0002">3D-structure</keyword>
<keyword id="KW-0222">Digestion</keyword>
<keyword id="KW-0903">Direct protein sequencing</keyword>
<keyword id="KW-1015">Disulfide bond</keyword>
<keyword id="KW-1185">Reference proteome</keyword>
<keyword id="KW-0964">Secreted</keyword>
<keyword id="KW-0721">Serine protease homolog</keyword>
<protein>
    <recommendedName>
        <fullName>Proproteinase E</fullName>
    </recommendedName>
    <alternativeName>
        <fullName>Procarboxypeptidase A complex component III</fullName>
    </alternativeName>
    <alternativeName>
        <fullName>Procarboxypeptidase A-S6 subunit III</fullName>
        <shortName>PROCPA-S6 III</shortName>
    </alternativeName>
</protein>
<evidence type="ECO:0000255" key="1">
    <source>
        <dbReference type="PROSITE-ProRule" id="PRU00274"/>
    </source>
</evidence>
<evidence type="ECO:0000269" key="2">
    <source>
    </source>
</evidence>
<evidence type="ECO:0000305" key="3"/>
<evidence type="ECO:0007829" key="4">
    <source>
        <dbReference type="PDB" id="1FON"/>
    </source>
</evidence>
<evidence type="ECO:0007829" key="5">
    <source>
        <dbReference type="PDB" id="1PYT"/>
    </source>
</evidence>
<reference key="1">
    <citation type="journal article" date="1990" name="FEBS Lett.">
        <title>Autolysis of proproteinase E in bovine procarboxypeptidase A ternary complex gives rise to subunit III.</title>
        <authorList>
            <person name="Pascual R."/>
            <person name="Vendrell J."/>
            <person name="Aviles F.X."/>
            <person name="Bonicel J."/>
            <person name="Wicker C."/>
            <person name="Puigserver A."/>
        </authorList>
    </citation>
    <scope>PROTEIN SEQUENCE OF 1-25</scope>
</reference>
<reference key="2">
    <citation type="journal article" date="1986" name="Eur. J. Biochem.">
        <title>Amino acid sequence and disulfide bridges of subunit III, a defective endopeptidase present in the bovine pancreatic 6 S procarboxypeptidase A complex.</title>
        <authorList>
            <person name="Venot N."/>
            <person name="Sciaky M."/>
            <person name="Puigserver A."/>
            <person name="Desnuelle P."/>
            <person name="Laurent G."/>
        </authorList>
    </citation>
    <scope>PROTEIN SEQUENCE OF 14-253</scope>
    <scope>DISULFIDE BONDS</scope>
</reference>
<reference key="3">
    <citation type="journal article" date="1994" name="EMBO J.">
        <title>Crystal structure of bovine procarboxypeptidase A-S6 subunit III, a highly structured truncated zymogen E.</title>
        <authorList>
            <person name="Pignol D."/>
            <person name="Gaboriaud C."/>
            <person name="Michon T."/>
            <person name="Kerfelec B."/>
            <person name="Chapus C."/>
            <person name="Fontecilla-Camps J.-C."/>
        </authorList>
    </citation>
    <scope>X-RAY CRYSTALLOGRAPHY (1.7 ANGSTROMS)</scope>
</reference>
<reference key="4">
    <citation type="journal article" date="1995" name="EMBO J.">
        <title>The three-dimensional structure of the native ternary complex of bovine pancreatic procarboxypeptidase A with proproteinase E and chymotrypsinogen C.</title>
        <authorList>
            <person name="Gomis-Rueth F.-X."/>
            <person name="Gomez M."/>
            <person name="Bode W."/>
            <person name="Huber R."/>
            <person name="Aviles F.X."/>
        </authorList>
    </citation>
    <scope>X-RAY CRYSTALLOGRAPHY (2.35 ANGSTROMS) OF COMPLEX WITH CTRC AND PPE</scope>
</reference>
<proteinExistence type="evidence at protein level"/>
<dbReference type="PIR" id="A25065">
    <property type="entry name" value="CPBOA3"/>
</dbReference>
<dbReference type="PDB" id="1FON">
    <property type="method" value="X-ray"/>
    <property type="resolution" value="1.70 A"/>
    <property type="chains" value="A/B=14-253"/>
</dbReference>
<dbReference type="PDB" id="1PYT">
    <property type="method" value="X-ray"/>
    <property type="resolution" value="2.35 A"/>
    <property type="chains" value="C=1-253"/>
</dbReference>
<dbReference type="PDBsum" id="1FON"/>
<dbReference type="PDBsum" id="1PYT"/>
<dbReference type="SMR" id="P05805"/>
<dbReference type="FunCoup" id="P05805">
    <property type="interactions" value="21"/>
</dbReference>
<dbReference type="STRING" id="9913.ENSBTAP00000017401"/>
<dbReference type="PaxDb" id="9913-ENSBTAP00000017401"/>
<dbReference type="eggNOG" id="KOG3627">
    <property type="taxonomic scope" value="Eukaryota"/>
</dbReference>
<dbReference type="InParanoid" id="P05805"/>
<dbReference type="EvolutionaryTrace" id="P05805"/>
<dbReference type="Proteomes" id="UP000009136">
    <property type="component" value="Unplaced"/>
</dbReference>
<dbReference type="GO" id="GO:0005615">
    <property type="term" value="C:extracellular space"/>
    <property type="evidence" value="ECO:0000318"/>
    <property type="project" value="GO_Central"/>
</dbReference>
<dbReference type="GO" id="GO:0004252">
    <property type="term" value="F:serine-type endopeptidase activity"/>
    <property type="evidence" value="ECO:0000318"/>
    <property type="project" value="GO_Central"/>
</dbReference>
<dbReference type="GO" id="GO:0007586">
    <property type="term" value="P:digestion"/>
    <property type="evidence" value="ECO:0007669"/>
    <property type="project" value="UniProtKB-KW"/>
</dbReference>
<dbReference type="GO" id="GO:0006508">
    <property type="term" value="P:proteolysis"/>
    <property type="evidence" value="ECO:0000318"/>
    <property type="project" value="GO_Central"/>
</dbReference>
<dbReference type="CDD" id="cd00190">
    <property type="entry name" value="Tryp_SPc"/>
    <property type="match status" value="1"/>
</dbReference>
<dbReference type="FunFam" id="2.40.10.10:FF:000280">
    <property type="match status" value="1"/>
</dbReference>
<dbReference type="FunFam" id="2.40.10.10:FF:000004">
    <property type="entry name" value="Tryptase gamma 1"/>
    <property type="match status" value="1"/>
</dbReference>
<dbReference type="Gene3D" id="2.40.10.10">
    <property type="entry name" value="Trypsin-like serine proteases"/>
    <property type="match status" value="2"/>
</dbReference>
<dbReference type="InterPro" id="IPR050850">
    <property type="entry name" value="Peptidase_S1_Elastase_sf"/>
</dbReference>
<dbReference type="InterPro" id="IPR009003">
    <property type="entry name" value="Peptidase_S1_PA"/>
</dbReference>
<dbReference type="InterPro" id="IPR043504">
    <property type="entry name" value="Peptidase_S1_PA_chymotrypsin"/>
</dbReference>
<dbReference type="InterPro" id="IPR001314">
    <property type="entry name" value="Peptidase_S1A"/>
</dbReference>
<dbReference type="InterPro" id="IPR001254">
    <property type="entry name" value="Trypsin_dom"/>
</dbReference>
<dbReference type="InterPro" id="IPR018114">
    <property type="entry name" value="TRYPSIN_HIS"/>
</dbReference>
<dbReference type="InterPro" id="IPR033116">
    <property type="entry name" value="TRYPSIN_SER"/>
</dbReference>
<dbReference type="PANTHER" id="PTHR24257">
    <property type="entry name" value="CHYMOTRYPSIN-LIKE ELASTASE FAMILY MEMBER"/>
    <property type="match status" value="1"/>
</dbReference>
<dbReference type="PANTHER" id="PTHR24257:SF22">
    <property type="entry name" value="CHYMOTRYPSIN-LIKE ELASTASE FAMILY MEMBER 3B"/>
    <property type="match status" value="1"/>
</dbReference>
<dbReference type="Pfam" id="PF00089">
    <property type="entry name" value="Trypsin"/>
    <property type="match status" value="1"/>
</dbReference>
<dbReference type="PRINTS" id="PR00722">
    <property type="entry name" value="CHYMOTRYPSIN"/>
</dbReference>
<dbReference type="SMART" id="SM00020">
    <property type="entry name" value="Tryp_SPc"/>
    <property type="match status" value="1"/>
</dbReference>
<dbReference type="SUPFAM" id="SSF50494">
    <property type="entry name" value="Trypsin-like serine proteases"/>
    <property type="match status" value="1"/>
</dbReference>
<dbReference type="PROSITE" id="PS50240">
    <property type="entry name" value="TRYPSIN_DOM"/>
    <property type="match status" value="1"/>
</dbReference>
<dbReference type="PROSITE" id="PS00134">
    <property type="entry name" value="TRYPSIN_HIS"/>
    <property type="match status" value="1"/>
</dbReference>
<dbReference type="PROSITE" id="PS00135">
    <property type="entry name" value="TRYPSIN_SER"/>
    <property type="match status" value="1"/>
</dbReference>
<accession>P05805</accession>
<sequence length="253" mass="27338">FSQPFSRPSSRVVNGEDAVPYSWSWQVSLQYEKDGAFHHTCGGSLIAPDWVVTAGHCISTSRTYQVVLGEYDRSVLEGSEQVIPINAGDLFVHPLWNSNCVACGNDIALVKLSRSAQLGDKVQLANLPPAGDILPNEAPCYISGWGRLYTGGPLPDKLQQALLPVVDYEHCSQWDWWGITVKKTMVCAGGDTRSGCNGDSGGPLNCPAADGSWQVHGVTSFVSAFGCNTIKKPTVFTRVSAFIDWIDETIASN</sequence>